<sequence length="551" mass="60715">MYCVQCEQTMVTPMGNGCSFGQGMCGKTAETSDLQDLLIACLHSLSAWALKAREHGIINHDADNFAPRAFFATLTNVNFDSNRIVGYAQQAIIYRNELIKAISEVEPNPELNHPLAYIELKGISIDQLAEQAKEFALDTDRAEIGEEVHGVRLLALYGLKGAAAYLEHAYVLGKFDNDLYVEYHGFMAWLGTKPRDLNELLEKSLAIGSMNFKVMAMLDAGETETFGNPVPATVNIRPVKGKCILISGHDLKDLKELLEQTEGKGINVYTHGEMLPAHGYPELKKYKHLVGNYGSGWQNQQKEFARFPGAIVMTSNCLIDPNVGDYADRIFTCNIVGWPGVVHLEKHNFAPVIEKALECDGFPYTELEHYITVGFGRKTLIDASDAVIDLVKAGKLSHVFVIGGCDGDKEERHYYTDLAYALPKDTAVLTLGCGKYRFNKLDFGTIDGGLPRLLDAGQCNDTYSAIMLAVTLSQKLGIGLNELPLSIVLSWFEQKAIIVLLTLLALGVKNVYSGPSKPAFLNDNVMNLLHEKFGLSGLTTPEQDFGHIINK</sequence>
<keyword id="KW-0001">2Fe-2S</keyword>
<keyword id="KW-0963">Cytoplasm</keyword>
<keyword id="KW-0408">Iron</keyword>
<keyword id="KW-0411">Iron-sulfur</keyword>
<keyword id="KW-0479">Metal-binding</keyword>
<keyword id="KW-0560">Oxidoreductase</keyword>
<accession>B3GYM9</accession>
<proteinExistence type="inferred from homology"/>
<gene>
    <name evidence="1" type="primary">hcp</name>
    <name type="ordered locus">APP7_1608</name>
</gene>
<organism>
    <name type="scientific">Actinobacillus pleuropneumoniae serotype 7 (strain AP76)</name>
    <dbReference type="NCBI Taxonomy" id="537457"/>
    <lineage>
        <taxon>Bacteria</taxon>
        <taxon>Pseudomonadati</taxon>
        <taxon>Pseudomonadota</taxon>
        <taxon>Gammaproteobacteria</taxon>
        <taxon>Pasteurellales</taxon>
        <taxon>Pasteurellaceae</taxon>
        <taxon>Actinobacillus</taxon>
    </lineage>
</organism>
<comment type="function">
    <text evidence="1">Catalyzes the reduction of hydroxylamine to form NH(3) and H(2)O.</text>
</comment>
<comment type="catalytic activity">
    <reaction evidence="1">
        <text>A + NH4(+) + H2O = hydroxylamine + AH2 + H(+)</text>
        <dbReference type="Rhea" id="RHEA:22052"/>
        <dbReference type="ChEBI" id="CHEBI:13193"/>
        <dbReference type="ChEBI" id="CHEBI:15377"/>
        <dbReference type="ChEBI" id="CHEBI:15378"/>
        <dbReference type="ChEBI" id="CHEBI:15429"/>
        <dbReference type="ChEBI" id="CHEBI:17499"/>
        <dbReference type="ChEBI" id="CHEBI:28938"/>
        <dbReference type="EC" id="1.7.99.1"/>
    </reaction>
</comment>
<comment type="cofactor">
    <cofactor evidence="1">
        <name>[2Fe-2S] cluster</name>
        <dbReference type="ChEBI" id="CHEBI:190135"/>
    </cofactor>
    <text evidence="1">Binds 1 [2Fe-2S] cluster.</text>
</comment>
<comment type="cofactor">
    <cofactor evidence="1">
        <name>hybrid [4Fe-2O-2S] cluster</name>
        <dbReference type="ChEBI" id="CHEBI:60519"/>
    </cofactor>
    <text evidence="1">Binds 1 hybrid [4Fe-2O-2S] cluster.</text>
</comment>
<comment type="subcellular location">
    <subcellularLocation>
        <location evidence="1">Cytoplasm</location>
    </subcellularLocation>
</comment>
<comment type="similarity">
    <text evidence="1">Belongs to the HCP family.</text>
</comment>
<dbReference type="EC" id="1.7.99.1" evidence="1"/>
<dbReference type="EMBL" id="CP001091">
    <property type="protein sequence ID" value="ACE62260.1"/>
    <property type="molecule type" value="Genomic_DNA"/>
</dbReference>
<dbReference type="RefSeq" id="WP_012478552.1">
    <property type="nucleotide sequence ID" value="NC_010939.1"/>
</dbReference>
<dbReference type="SMR" id="B3GYM9"/>
<dbReference type="KEGG" id="apa:APP7_1608"/>
<dbReference type="HOGENOM" id="CLU_038344_2_0_6"/>
<dbReference type="Proteomes" id="UP000001226">
    <property type="component" value="Chromosome"/>
</dbReference>
<dbReference type="GO" id="GO:0005737">
    <property type="term" value="C:cytoplasm"/>
    <property type="evidence" value="ECO:0007669"/>
    <property type="project" value="UniProtKB-SubCell"/>
</dbReference>
<dbReference type="GO" id="GO:0051537">
    <property type="term" value="F:2 iron, 2 sulfur cluster binding"/>
    <property type="evidence" value="ECO:0007669"/>
    <property type="project" value="UniProtKB-KW"/>
</dbReference>
<dbReference type="GO" id="GO:0050418">
    <property type="term" value="F:hydroxylamine reductase activity"/>
    <property type="evidence" value="ECO:0007669"/>
    <property type="project" value="UniProtKB-UniRule"/>
</dbReference>
<dbReference type="GO" id="GO:0046872">
    <property type="term" value="F:metal ion binding"/>
    <property type="evidence" value="ECO:0007669"/>
    <property type="project" value="UniProtKB-KW"/>
</dbReference>
<dbReference type="GO" id="GO:0004601">
    <property type="term" value="F:peroxidase activity"/>
    <property type="evidence" value="ECO:0007669"/>
    <property type="project" value="TreeGrafter"/>
</dbReference>
<dbReference type="GO" id="GO:0042542">
    <property type="term" value="P:response to hydrogen peroxide"/>
    <property type="evidence" value="ECO:0007669"/>
    <property type="project" value="TreeGrafter"/>
</dbReference>
<dbReference type="FunFam" id="1.20.1270.20:FF:000001">
    <property type="entry name" value="Hydroxylamine reductase"/>
    <property type="match status" value="1"/>
</dbReference>
<dbReference type="FunFam" id="1.20.1270.20:FF:000002">
    <property type="entry name" value="Hydroxylamine reductase"/>
    <property type="match status" value="1"/>
</dbReference>
<dbReference type="FunFam" id="3.40.50.2030:FF:000001">
    <property type="entry name" value="Hydroxylamine reductase"/>
    <property type="match status" value="1"/>
</dbReference>
<dbReference type="FunFam" id="3.40.50.2030:FF:000002">
    <property type="entry name" value="Hydroxylamine reductase"/>
    <property type="match status" value="1"/>
</dbReference>
<dbReference type="Gene3D" id="1.20.1270.20">
    <property type="match status" value="2"/>
</dbReference>
<dbReference type="Gene3D" id="3.40.50.2030">
    <property type="match status" value="2"/>
</dbReference>
<dbReference type="HAMAP" id="MF_00069">
    <property type="entry name" value="Hydroxylam_reduct"/>
    <property type="match status" value="1"/>
</dbReference>
<dbReference type="InterPro" id="IPR004137">
    <property type="entry name" value="HCP/CODH"/>
</dbReference>
<dbReference type="InterPro" id="IPR010048">
    <property type="entry name" value="Hydroxylam_reduct"/>
</dbReference>
<dbReference type="InterPro" id="IPR016099">
    <property type="entry name" value="Prismane-like_a/b-sand"/>
</dbReference>
<dbReference type="InterPro" id="IPR011254">
    <property type="entry name" value="Prismane-like_sf"/>
</dbReference>
<dbReference type="InterPro" id="IPR016100">
    <property type="entry name" value="Prismane_a-bundle"/>
</dbReference>
<dbReference type="NCBIfam" id="TIGR01703">
    <property type="entry name" value="hybrid_clust"/>
    <property type="match status" value="1"/>
</dbReference>
<dbReference type="NCBIfam" id="NF003658">
    <property type="entry name" value="PRK05290.1"/>
    <property type="match status" value="1"/>
</dbReference>
<dbReference type="PANTHER" id="PTHR30109">
    <property type="entry name" value="HYDROXYLAMINE REDUCTASE"/>
    <property type="match status" value="1"/>
</dbReference>
<dbReference type="PANTHER" id="PTHR30109:SF0">
    <property type="entry name" value="HYDROXYLAMINE REDUCTASE"/>
    <property type="match status" value="1"/>
</dbReference>
<dbReference type="Pfam" id="PF03063">
    <property type="entry name" value="Prismane"/>
    <property type="match status" value="1"/>
</dbReference>
<dbReference type="PIRSF" id="PIRSF000076">
    <property type="entry name" value="HCP"/>
    <property type="match status" value="1"/>
</dbReference>
<dbReference type="SUPFAM" id="SSF56821">
    <property type="entry name" value="Prismane protein-like"/>
    <property type="match status" value="1"/>
</dbReference>
<name>HCP_ACTP7</name>
<evidence type="ECO:0000255" key="1">
    <source>
        <dbReference type="HAMAP-Rule" id="MF_00069"/>
    </source>
</evidence>
<reference key="1">
    <citation type="submission" date="2008-06" db="EMBL/GenBank/DDBJ databases">
        <title>Genome and proteome analysis of A. pleuropneumoniae serotype 7.</title>
        <authorList>
            <person name="Linke B."/>
            <person name="Buettner F."/>
            <person name="Martinez-Arias R."/>
            <person name="Goesmann A."/>
            <person name="Baltes N."/>
            <person name="Tegetmeyer H."/>
            <person name="Singh M."/>
            <person name="Gerlach G.F."/>
        </authorList>
    </citation>
    <scope>NUCLEOTIDE SEQUENCE [LARGE SCALE GENOMIC DNA]</scope>
    <source>
        <strain>AP76</strain>
    </source>
</reference>
<protein>
    <recommendedName>
        <fullName evidence="1">Hydroxylamine reductase</fullName>
        <ecNumber evidence="1">1.7.99.1</ecNumber>
    </recommendedName>
    <alternativeName>
        <fullName evidence="1">Hybrid-cluster protein</fullName>
        <shortName evidence="1">HCP</shortName>
    </alternativeName>
    <alternativeName>
        <fullName evidence="1">Prismane protein</fullName>
    </alternativeName>
</protein>
<feature type="chain" id="PRO_1000092327" description="Hydroxylamine reductase">
    <location>
        <begin position="1"/>
        <end position="551"/>
    </location>
</feature>
<feature type="binding site" evidence="1">
    <location>
        <position position="3"/>
    </location>
    <ligand>
        <name>[2Fe-2S] cluster</name>
        <dbReference type="ChEBI" id="CHEBI:190135"/>
    </ligand>
</feature>
<feature type="binding site" evidence="1">
    <location>
        <position position="6"/>
    </location>
    <ligand>
        <name>[2Fe-2S] cluster</name>
        <dbReference type="ChEBI" id="CHEBI:190135"/>
    </ligand>
</feature>
<feature type="binding site" evidence="1">
    <location>
        <position position="18"/>
    </location>
    <ligand>
        <name>[2Fe-2S] cluster</name>
        <dbReference type="ChEBI" id="CHEBI:190135"/>
    </ligand>
</feature>
<feature type="binding site" evidence="1">
    <location>
        <position position="25"/>
    </location>
    <ligand>
        <name>[2Fe-2S] cluster</name>
        <dbReference type="ChEBI" id="CHEBI:190135"/>
    </ligand>
</feature>
<feature type="binding site" evidence="1">
    <location>
        <position position="249"/>
    </location>
    <ligand>
        <name>hybrid [4Fe-2O-2S] cluster</name>
        <dbReference type="ChEBI" id="CHEBI:60519"/>
    </ligand>
</feature>
<feature type="binding site" evidence="1">
    <location>
        <position position="273"/>
    </location>
    <ligand>
        <name>hybrid [4Fe-2O-2S] cluster</name>
        <dbReference type="ChEBI" id="CHEBI:60519"/>
    </ligand>
</feature>
<feature type="binding site" evidence="1">
    <location>
        <position position="317"/>
    </location>
    <ligand>
        <name>hybrid [4Fe-2O-2S] cluster</name>
        <dbReference type="ChEBI" id="CHEBI:60519"/>
    </ligand>
</feature>
<feature type="binding site" description="via persulfide group" evidence="1">
    <location>
        <position position="405"/>
    </location>
    <ligand>
        <name>hybrid [4Fe-2O-2S] cluster</name>
        <dbReference type="ChEBI" id="CHEBI:60519"/>
    </ligand>
</feature>
<feature type="binding site" evidence="1">
    <location>
        <position position="433"/>
    </location>
    <ligand>
        <name>hybrid [4Fe-2O-2S] cluster</name>
        <dbReference type="ChEBI" id="CHEBI:60519"/>
    </ligand>
</feature>
<feature type="binding site" evidence="1">
    <location>
        <position position="459"/>
    </location>
    <ligand>
        <name>hybrid [4Fe-2O-2S] cluster</name>
        <dbReference type="ChEBI" id="CHEBI:60519"/>
    </ligand>
</feature>
<feature type="binding site" evidence="1">
    <location>
        <position position="493"/>
    </location>
    <ligand>
        <name>hybrid [4Fe-2O-2S] cluster</name>
        <dbReference type="ChEBI" id="CHEBI:60519"/>
    </ligand>
</feature>
<feature type="binding site" evidence="1">
    <location>
        <position position="495"/>
    </location>
    <ligand>
        <name>hybrid [4Fe-2O-2S] cluster</name>
        <dbReference type="ChEBI" id="CHEBI:60519"/>
    </ligand>
</feature>
<feature type="modified residue" description="Cysteine persulfide" evidence="1">
    <location>
        <position position="405"/>
    </location>
</feature>